<feature type="chain" id="PRO_0000099995" description="Ribosomal large subunit pseudouridine synthase B">
    <location>
        <begin position="1"/>
        <end position="550"/>
    </location>
</feature>
<feature type="domain" description="S4 RNA-binding" evidence="2">
    <location>
        <begin position="28"/>
        <end position="97"/>
    </location>
</feature>
<feature type="region of interest" description="Disordered" evidence="3">
    <location>
        <begin position="294"/>
        <end position="550"/>
    </location>
</feature>
<feature type="compositionally biased region" description="Basic and acidic residues" evidence="3">
    <location>
        <begin position="317"/>
        <end position="334"/>
    </location>
</feature>
<feature type="compositionally biased region" description="Gly residues" evidence="3">
    <location>
        <begin position="420"/>
        <end position="451"/>
    </location>
</feature>
<feature type="compositionally biased region" description="Gly residues" evidence="3">
    <location>
        <begin position="490"/>
        <end position="501"/>
    </location>
</feature>
<feature type="compositionally biased region" description="Gly residues" evidence="3">
    <location>
        <begin position="509"/>
        <end position="550"/>
    </location>
</feature>
<feature type="active site" description="Nucleophile" evidence="1">
    <location>
        <position position="132"/>
    </location>
</feature>
<gene>
    <name type="primary">rluB</name>
    <name type="ordered locus">XAC2318</name>
</gene>
<protein>
    <recommendedName>
        <fullName>Ribosomal large subunit pseudouridine synthase B</fullName>
        <ecNumber>5.4.99.22</ecNumber>
    </recommendedName>
    <alternativeName>
        <fullName>23S rRNA pseudouridine(2605) synthase</fullName>
    </alternativeName>
    <alternativeName>
        <fullName>rRNA pseudouridylate synthase B</fullName>
    </alternativeName>
    <alternativeName>
        <fullName>rRNA-uridine isomerase B</fullName>
    </alternativeName>
</protein>
<keyword id="KW-0413">Isomerase</keyword>
<keyword id="KW-0694">RNA-binding</keyword>
<keyword id="KW-0698">rRNA processing</keyword>
<comment type="function">
    <text evidence="1">Responsible for synthesis of pseudouridine from uracil-2605 in 23S ribosomal RNA.</text>
</comment>
<comment type="catalytic activity">
    <reaction>
        <text>uridine(2605) in 23S rRNA = pseudouridine(2605) in 23S rRNA</text>
        <dbReference type="Rhea" id="RHEA:42520"/>
        <dbReference type="Rhea" id="RHEA-COMP:10095"/>
        <dbReference type="Rhea" id="RHEA-COMP:10096"/>
        <dbReference type="ChEBI" id="CHEBI:65314"/>
        <dbReference type="ChEBI" id="CHEBI:65315"/>
        <dbReference type="EC" id="5.4.99.22"/>
    </reaction>
</comment>
<comment type="similarity">
    <text evidence="4">Belongs to the pseudouridine synthase RsuA family.</text>
</comment>
<evidence type="ECO:0000250" key="1"/>
<evidence type="ECO:0000255" key="2">
    <source>
        <dbReference type="PROSITE-ProRule" id="PRU00182"/>
    </source>
</evidence>
<evidence type="ECO:0000256" key="3">
    <source>
        <dbReference type="SAM" id="MobiDB-lite"/>
    </source>
</evidence>
<evidence type="ECO:0000305" key="4"/>
<proteinExistence type="inferred from homology"/>
<sequence length="550" mass="57729">MSDTPRKLSLNKLSLKRDSAPEAPKLEERLHKVLAQAGLGSRRALEQRIADGLIKVNGAVAQTGMSVRSGDKIELDGRSFVASALTEPSRVLIYNKPEGEVTTREDPEGRPTVFESLPVLKGSRWIAIGRLDINTTGLLLLTTDGELANAMMHPSYEVEREYVVRVRAPEGEEKVSDAIIERLSRGVLLEDGGAKFDEIERIGGTDSHDWFRVVVKEGRNREVRRLWESQGCQVSRLKRSRYGKISLPRELLRGHSVEVAQDKVDALRAELKLEEGAPSALTLQPVIGQRRAAKSTVHVSRDGRSNAYVNGQTSGADEGRELRRFDNLREDRGRGGRGKPGGFKGGLTVSGEAAARQSQQRPFKQRGPAKGDRGALPDGNPAAFRSWYVPDGVSTGPSGHRNAGPSGPGTGQARPYAKKGPGGARPGTGGPVGARSGGPGRGAGGGQGQSQGQGQRKHPYGHPGNAPSFPSDHANPGFNPYGAARPAGRPSGGRPGPGGNRGPASANRGPGGPGGGARGPGGPGGAPRGPGGRPPGGGNRRPPGGGNRGR</sequence>
<reference key="1">
    <citation type="journal article" date="2002" name="Nature">
        <title>Comparison of the genomes of two Xanthomonas pathogens with differing host specificities.</title>
        <authorList>
            <person name="da Silva A.C.R."/>
            <person name="Ferro J.A."/>
            <person name="Reinach F.C."/>
            <person name="Farah C.S."/>
            <person name="Furlan L.R."/>
            <person name="Quaggio R.B."/>
            <person name="Monteiro-Vitorello C.B."/>
            <person name="Van Sluys M.A."/>
            <person name="Almeida N.F. Jr."/>
            <person name="Alves L.M.C."/>
            <person name="do Amaral A.M."/>
            <person name="Bertolini M.C."/>
            <person name="Camargo L.E.A."/>
            <person name="Camarotte G."/>
            <person name="Cannavan F."/>
            <person name="Cardozo J."/>
            <person name="Chambergo F."/>
            <person name="Ciapina L.P."/>
            <person name="Cicarelli R.M.B."/>
            <person name="Coutinho L.L."/>
            <person name="Cursino-Santos J.R."/>
            <person name="El-Dorry H."/>
            <person name="Faria J.B."/>
            <person name="Ferreira A.J.S."/>
            <person name="Ferreira R.C.C."/>
            <person name="Ferro M.I.T."/>
            <person name="Formighieri E.F."/>
            <person name="Franco M.C."/>
            <person name="Greggio C.C."/>
            <person name="Gruber A."/>
            <person name="Katsuyama A.M."/>
            <person name="Kishi L.T."/>
            <person name="Leite R.P."/>
            <person name="Lemos E.G.M."/>
            <person name="Lemos M.V.F."/>
            <person name="Locali E.C."/>
            <person name="Machado M.A."/>
            <person name="Madeira A.M.B.N."/>
            <person name="Martinez-Rossi N.M."/>
            <person name="Martins E.C."/>
            <person name="Meidanis J."/>
            <person name="Menck C.F.M."/>
            <person name="Miyaki C.Y."/>
            <person name="Moon D.H."/>
            <person name="Moreira L.M."/>
            <person name="Novo M.T.M."/>
            <person name="Okura V.K."/>
            <person name="Oliveira M.C."/>
            <person name="Oliveira V.R."/>
            <person name="Pereira H.A."/>
            <person name="Rossi A."/>
            <person name="Sena J.A.D."/>
            <person name="Silva C."/>
            <person name="de Souza R.F."/>
            <person name="Spinola L.A.F."/>
            <person name="Takita M.A."/>
            <person name="Tamura R.E."/>
            <person name="Teixeira E.C."/>
            <person name="Tezza R.I.D."/>
            <person name="Trindade dos Santos M."/>
            <person name="Truffi D."/>
            <person name="Tsai S.M."/>
            <person name="White F.F."/>
            <person name="Setubal J.C."/>
            <person name="Kitajima J.P."/>
        </authorList>
    </citation>
    <scope>NUCLEOTIDE SEQUENCE [LARGE SCALE GENOMIC DNA]</scope>
    <source>
        <strain>306</strain>
    </source>
</reference>
<accession>Q8PK58</accession>
<dbReference type="EC" id="5.4.99.22"/>
<dbReference type="EMBL" id="AE008923">
    <property type="protein sequence ID" value="AAM37171.1"/>
    <property type="molecule type" value="Genomic_DNA"/>
</dbReference>
<dbReference type="RefSeq" id="WP_005922523.1">
    <property type="nucleotide sequence ID" value="NC_003919.1"/>
</dbReference>
<dbReference type="SMR" id="Q8PK58"/>
<dbReference type="KEGG" id="xac:XAC2318"/>
<dbReference type="eggNOG" id="COG1187">
    <property type="taxonomic scope" value="Bacteria"/>
</dbReference>
<dbReference type="HOGENOM" id="CLU_024979_5_0_6"/>
<dbReference type="Proteomes" id="UP000000576">
    <property type="component" value="Chromosome"/>
</dbReference>
<dbReference type="GO" id="GO:0160139">
    <property type="term" value="F:23S rRNA pseudouridine(2605) synthase activity"/>
    <property type="evidence" value="ECO:0007669"/>
    <property type="project" value="UniProtKB-EC"/>
</dbReference>
<dbReference type="GO" id="GO:0003723">
    <property type="term" value="F:RNA binding"/>
    <property type="evidence" value="ECO:0007669"/>
    <property type="project" value="UniProtKB-KW"/>
</dbReference>
<dbReference type="GO" id="GO:0000455">
    <property type="term" value="P:enzyme-directed rRNA pseudouridine synthesis"/>
    <property type="evidence" value="ECO:0007669"/>
    <property type="project" value="UniProtKB-ARBA"/>
</dbReference>
<dbReference type="CDD" id="cd00165">
    <property type="entry name" value="S4"/>
    <property type="match status" value="1"/>
</dbReference>
<dbReference type="FunFam" id="3.30.70.1560:FF:000001">
    <property type="entry name" value="Pseudouridine synthase"/>
    <property type="match status" value="1"/>
</dbReference>
<dbReference type="FunFam" id="3.30.70.580:FF:000009">
    <property type="entry name" value="Pseudouridine synthase"/>
    <property type="match status" value="1"/>
</dbReference>
<dbReference type="Gene3D" id="3.30.70.1560">
    <property type="entry name" value="Alpha-L RNA-binding motif"/>
    <property type="match status" value="1"/>
</dbReference>
<dbReference type="Gene3D" id="3.30.70.580">
    <property type="entry name" value="Pseudouridine synthase I, catalytic domain, N-terminal subdomain"/>
    <property type="match status" value="1"/>
</dbReference>
<dbReference type="Gene3D" id="3.10.290.10">
    <property type="entry name" value="RNA-binding S4 domain"/>
    <property type="match status" value="1"/>
</dbReference>
<dbReference type="InterPro" id="IPR042092">
    <property type="entry name" value="PsdUridine_s_RsuA/RluB/E/F_cat"/>
</dbReference>
<dbReference type="InterPro" id="IPR020103">
    <property type="entry name" value="PsdUridine_synth_cat_dom_sf"/>
</dbReference>
<dbReference type="InterPro" id="IPR006145">
    <property type="entry name" value="PsdUridine_synth_RsuA/RluA"/>
</dbReference>
<dbReference type="InterPro" id="IPR000748">
    <property type="entry name" value="PsdUridine_synth_RsuA/RluB/E/F"/>
</dbReference>
<dbReference type="InterPro" id="IPR018496">
    <property type="entry name" value="PsdUridine_synth_RsuA/RluB_CS"/>
</dbReference>
<dbReference type="InterPro" id="IPR050343">
    <property type="entry name" value="RsuA_PseudoU_synthase"/>
</dbReference>
<dbReference type="InterPro" id="IPR002942">
    <property type="entry name" value="S4_RNA-bd"/>
</dbReference>
<dbReference type="InterPro" id="IPR036986">
    <property type="entry name" value="S4_RNA-bd_sf"/>
</dbReference>
<dbReference type="InterPro" id="IPR020094">
    <property type="entry name" value="TruA/RsuA/RluB/E/F_N"/>
</dbReference>
<dbReference type="NCBIfam" id="TIGR00093">
    <property type="entry name" value="pseudouridine synthase"/>
    <property type="match status" value="1"/>
</dbReference>
<dbReference type="PANTHER" id="PTHR47683">
    <property type="entry name" value="PSEUDOURIDINE SYNTHASE FAMILY PROTEIN-RELATED"/>
    <property type="match status" value="1"/>
</dbReference>
<dbReference type="PANTHER" id="PTHR47683:SF3">
    <property type="entry name" value="RIBOSOMAL LARGE SUBUNIT PSEUDOURIDINE SYNTHASE B"/>
    <property type="match status" value="1"/>
</dbReference>
<dbReference type="Pfam" id="PF00849">
    <property type="entry name" value="PseudoU_synth_2"/>
    <property type="match status" value="1"/>
</dbReference>
<dbReference type="Pfam" id="PF01479">
    <property type="entry name" value="S4"/>
    <property type="match status" value="1"/>
</dbReference>
<dbReference type="SMART" id="SM00363">
    <property type="entry name" value="S4"/>
    <property type="match status" value="1"/>
</dbReference>
<dbReference type="SUPFAM" id="SSF55174">
    <property type="entry name" value="Alpha-L RNA-binding motif"/>
    <property type="match status" value="1"/>
</dbReference>
<dbReference type="SUPFAM" id="SSF55120">
    <property type="entry name" value="Pseudouridine synthase"/>
    <property type="match status" value="1"/>
</dbReference>
<dbReference type="PROSITE" id="PS01149">
    <property type="entry name" value="PSI_RSU"/>
    <property type="match status" value="1"/>
</dbReference>
<dbReference type="PROSITE" id="PS50889">
    <property type="entry name" value="S4"/>
    <property type="match status" value="1"/>
</dbReference>
<name>RLUB_XANAC</name>
<organism>
    <name type="scientific">Xanthomonas axonopodis pv. citri (strain 306)</name>
    <dbReference type="NCBI Taxonomy" id="190486"/>
    <lineage>
        <taxon>Bacteria</taxon>
        <taxon>Pseudomonadati</taxon>
        <taxon>Pseudomonadota</taxon>
        <taxon>Gammaproteobacteria</taxon>
        <taxon>Lysobacterales</taxon>
        <taxon>Lysobacteraceae</taxon>
        <taxon>Xanthomonas</taxon>
    </lineage>
</organism>